<protein>
    <recommendedName>
        <fullName evidence="1">Intermediate capsid protein VP6</fullName>
    </recommendedName>
</protein>
<dbReference type="EMBL" id="U82971">
    <property type="protein sequence ID" value="AAB41105.1"/>
    <property type="molecule type" value="mRNA"/>
</dbReference>
<dbReference type="SMR" id="P89043"/>
<dbReference type="GO" id="GO:0019031">
    <property type="term" value="C:viral envelope"/>
    <property type="evidence" value="ECO:0007669"/>
    <property type="project" value="UniProtKB-UniRule"/>
</dbReference>
<dbReference type="GO" id="GO:0039626">
    <property type="term" value="C:viral intermediate capsid"/>
    <property type="evidence" value="ECO:0007669"/>
    <property type="project" value="UniProtKB-UniRule"/>
</dbReference>
<dbReference type="GO" id="GO:0046789">
    <property type="term" value="F:host cell surface receptor binding"/>
    <property type="evidence" value="ECO:0007669"/>
    <property type="project" value="UniProtKB-UniRule"/>
</dbReference>
<dbReference type="GO" id="GO:0046872">
    <property type="term" value="F:metal ion binding"/>
    <property type="evidence" value="ECO:0007669"/>
    <property type="project" value="UniProtKB-UniRule"/>
</dbReference>
<dbReference type="GO" id="GO:0005198">
    <property type="term" value="F:structural molecule activity"/>
    <property type="evidence" value="ECO:0007669"/>
    <property type="project" value="UniProtKB-UniRule"/>
</dbReference>
<dbReference type="GO" id="GO:0019064">
    <property type="term" value="P:fusion of virus membrane with host plasma membrane"/>
    <property type="evidence" value="ECO:0007669"/>
    <property type="project" value="UniProtKB-UniRule"/>
</dbReference>
<dbReference type="Gene3D" id="2.60.120.170">
    <property type="match status" value="1"/>
</dbReference>
<dbReference type="Gene3D" id="1.10.1350.10">
    <property type="entry name" value="Viral capsid alpha domain"/>
    <property type="match status" value="1"/>
</dbReference>
<dbReference type="HAMAP" id="MF_04126">
    <property type="entry name" value="Rota_VP6"/>
    <property type="match status" value="1"/>
</dbReference>
<dbReference type="HAMAP" id="MF_04129">
    <property type="entry name" value="Rota_VP6_A"/>
    <property type="match status" value="1"/>
</dbReference>
<dbReference type="InterPro" id="IPR008980">
    <property type="entry name" value="Capsid_hemagglutn"/>
</dbReference>
<dbReference type="InterPro" id="IPR001385">
    <property type="entry name" value="Rotavirus_A/C_VP6"/>
</dbReference>
<dbReference type="InterPro" id="IPR008935">
    <property type="entry name" value="Virus_capsid_a-hlx_vir"/>
</dbReference>
<dbReference type="Pfam" id="PF00980">
    <property type="entry name" value="Rota_Capsid_VP6"/>
    <property type="match status" value="1"/>
</dbReference>
<dbReference type="SUPFAM" id="SSF48345">
    <property type="entry name" value="A virus capsid protein alpha-helical domain"/>
    <property type="match status" value="1"/>
</dbReference>
<dbReference type="SUPFAM" id="SSF49818">
    <property type="entry name" value="Viral protein domain"/>
    <property type="match status" value="1"/>
</dbReference>
<accession>P89043</accession>
<proteinExistence type="evidence at transcript level"/>
<organismHost>
    <name type="scientific">Sus scrofa</name>
    <name type="common">Pig</name>
    <dbReference type="NCBI Taxonomy" id="9823"/>
</organismHost>
<keyword id="KW-0106">Calcium</keyword>
<keyword id="KW-0167">Capsid protein</keyword>
<keyword id="KW-1154">Intermediate capsid protein</keyword>
<keyword id="KW-0479">Metal-binding</keyword>
<keyword id="KW-0832">Ubl conjugation</keyword>
<keyword id="KW-0946">Virion</keyword>
<keyword id="KW-0862">Zinc</keyword>
<name>VP6_ROTP3</name>
<comment type="function">
    <text evidence="1">Intermediate capsid protein that self assembles to form an icosahedral capsid with a T=13 symmetry, which consists of 230 trimers of VP6, with channels at each of its five-fold vertices. This capsid constitutes the middle concentric layer of the viral mature particle. The innermost VP2 capsid and the intermediate VP6 capsid remain intact following cell entry to protect the dsRNA from degradation and to prevent unfavorable antiviral responses in the host cell during all the replication cycle of the virus. Nascent transcripts are transcribed within the structural confines of this double-layered particle (DLP) and are extruded through the channels at the five-fold axes. VP6 is required for the transcription activity of the DLP.</text>
</comment>
<comment type="subunit">
    <text evidence="1">Homotrimer. Interacts with the inner capsid protein VP2. Interacts with the outer capsid glycoprotein VP7. Interacts with the outer capsid protein VP5*.</text>
</comment>
<comment type="subcellular location">
    <subcellularLocation>
        <location evidence="1">Virion</location>
    </subcellularLocation>
    <text evidence="1">Component of the intermediate capsid. Also found in spherical cytoplasmic structures, called virus factories, that appear early after infection and are the site of viral replication and packaging.</text>
</comment>
<comment type="PTM">
    <text evidence="1">The N-terminus is blocked.</text>
</comment>
<comment type="PTM">
    <text evidence="1">Sumoylated with SUMO1 and SUMO2. Sumoylation of viral proteins seems to have a positive role on viral replication.</text>
</comment>
<comment type="miscellaneous">
    <text evidence="1">The VP6 trimer contains a zinc ion located at the center of the molecule. The zinc ion is not essential for either trimerization or transcription activity of the DLP. Zinc-depleted VP6 has an increased sensitivity to proteases.</text>
</comment>
<comment type="similarity">
    <text evidence="1">Belongs to the rotavirus VP6 family.</text>
</comment>
<evidence type="ECO:0000255" key="1">
    <source>
        <dbReference type="HAMAP-Rule" id="MF_04129"/>
    </source>
</evidence>
<feature type="chain" id="PRO_0000368170" description="Intermediate capsid protein VP6">
    <location>
        <begin position="1"/>
        <end position="397"/>
    </location>
</feature>
<feature type="region of interest" description="Interaction with the inner capsid protein VP2" evidence="1">
    <location>
        <begin position="62"/>
        <end position="73"/>
    </location>
</feature>
<feature type="binding site" evidence="1">
    <location>
        <position position="153"/>
    </location>
    <ligand>
        <name>Zn(2+)</name>
        <dbReference type="ChEBI" id="CHEBI:29105"/>
        <note>ligand shared between all trimeric partners</note>
    </ligand>
</feature>
<feature type="binding site" evidence="1">
    <location>
        <position position="266"/>
    </location>
    <ligand>
        <name>Ca(2+)</name>
        <dbReference type="ChEBI" id="CHEBI:29108"/>
    </ligand>
</feature>
<feature type="binding site" evidence="1">
    <location>
        <position position="286"/>
    </location>
    <ligand>
        <name>Ca(2+)</name>
        <dbReference type="ChEBI" id="CHEBI:29108"/>
    </ligand>
</feature>
<reference key="1">
    <citation type="submission" date="1996-12" db="EMBL/GenBank/DDBJ databases">
        <title>Porcine rotavirus inner capsid protein VP6 mRNA, complete cds and expression of VP6 and VP7 in insect cells using baculovirus.</title>
        <authorList>
            <person name="Nagesha H.S."/>
            <person name="Holmes I.H."/>
        </authorList>
    </citation>
    <scope>NUCLEOTIDE SEQUENCE [MRNA]</scope>
</reference>
<organism>
    <name type="scientific">Rotavirus A (isolate RVA/Pig/Australia/CRW-8/1987/G3P9[7])</name>
    <name type="common">RV-A</name>
    <dbReference type="NCBI Taxonomy" id="31578"/>
    <lineage>
        <taxon>Viruses</taxon>
        <taxon>Riboviria</taxon>
        <taxon>Orthornavirae</taxon>
        <taxon>Duplornaviricota</taxon>
        <taxon>Resentoviricetes</taxon>
        <taxon>Reovirales</taxon>
        <taxon>Sedoreoviridae</taxon>
        <taxon>Rotavirus</taxon>
        <taxon>Rotavirus A</taxon>
    </lineage>
</organism>
<sequence>MEVLYSLSKTLKDARDKIVEGTLYSNVSDLIQQFNQMIVTMNGNDFQTGGIGNSPVRNWNFDFGLLGTTLLNLDANYVENARTTIEYFVDFIDNVCMDEMTRESQRSGIAPQSEALRKQSGIKFKRINFDNSSDYIENWNLQNRRQRTGFVFHKPNILPYSASFTLNRSQPAHDNLMGTMWINAGSEIQVAGFDYSCAFNAPANIQQFEHVVPLRRALTTATITLLPDAERFSFPRVINSADGTTTWYFNPVILRPSNVEVEFLLNGQIINTYQARFGTIIARNFDTIRLSFQLVRPPNMTPAVANLFPQAPPFIFHATVGLTLRIESAVCESVLADASETLLANVTSVRQEYAIPVGPVFPPGMNWTELITNYSPSREDNLQRVFTVASIRSMLIK</sequence>